<sequence length="103" mass="10941">MSAVRIKKGDTVKVIAGKDKGKEGKVLSVNAKNHTALVEGVNMVTKHAKPSAANQQGGILHQEAPIDISNIAYSLKGKETKIGYDFKDGKKVRVAKATGEVID</sequence>
<evidence type="ECO:0000255" key="1">
    <source>
        <dbReference type="HAMAP-Rule" id="MF_01326"/>
    </source>
</evidence>
<evidence type="ECO:0000305" key="2"/>
<organism>
    <name type="scientific">Lachnospira eligens (strain ATCC 27750 / DSM 3376 / VPI C15-48 / C15-B4)</name>
    <name type="common">Eubacterium eligens</name>
    <dbReference type="NCBI Taxonomy" id="515620"/>
    <lineage>
        <taxon>Bacteria</taxon>
        <taxon>Bacillati</taxon>
        <taxon>Bacillota</taxon>
        <taxon>Clostridia</taxon>
        <taxon>Lachnospirales</taxon>
        <taxon>Lachnospiraceae</taxon>
        <taxon>Lachnospira</taxon>
    </lineage>
</organism>
<keyword id="KW-1185">Reference proteome</keyword>
<keyword id="KW-0687">Ribonucleoprotein</keyword>
<keyword id="KW-0689">Ribosomal protein</keyword>
<keyword id="KW-0694">RNA-binding</keyword>
<keyword id="KW-0699">rRNA-binding</keyword>
<dbReference type="EMBL" id="CP001104">
    <property type="protein sequence ID" value="ACR71346.1"/>
    <property type="molecule type" value="Genomic_DNA"/>
</dbReference>
<dbReference type="RefSeq" id="WP_012738583.1">
    <property type="nucleotide sequence ID" value="NC_012778.1"/>
</dbReference>
<dbReference type="SMR" id="C4Z2U1"/>
<dbReference type="STRING" id="515620.EUBELI_00310"/>
<dbReference type="GeneID" id="41355083"/>
<dbReference type="KEGG" id="eel:EUBELI_00310"/>
<dbReference type="eggNOG" id="COG0198">
    <property type="taxonomic scope" value="Bacteria"/>
</dbReference>
<dbReference type="HOGENOM" id="CLU_093315_2_0_9"/>
<dbReference type="Proteomes" id="UP000001476">
    <property type="component" value="Chromosome"/>
</dbReference>
<dbReference type="GO" id="GO:1990904">
    <property type="term" value="C:ribonucleoprotein complex"/>
    <property type="evidence" value="ECO:0007669"/>
    <property type="project" value="UniProtKB-KW"/>
</dbReference>
<dbReference type="GO" id="GO:0005840">
    <property type="term" value="C:ribosome"/>
    <property type="evidence" value="ECO:0007669"/>
    <property type="project" value="UniProtKB-KW"/>
</dbReference>
<dbReference type="GO" id="GO:0019843">
    <property type="term" value="F:rRNA binding"/>
    <property type="evidence" value="ECO:0007669"/>
    <property type="project" value="UniProtKB-UniRule"/>
</dbReference>
<dbReference type="GO" id="GO:0003735">
    <property type="term" value="F:structural constituent of ribosome"/>
    <property type="evidence" value="ECO:0007669"/>
    <property type="project" value="InterPro"/>
</dbReference>
<dbReference type="GO" id="GO:0006412">
    <property type="term" value="P:translation"/>
    <property type="evidence" value="ECO:0007669"/>
    <property type="project" value="UniProtKB-UniRule"/>
</dbReference>
<dbReference type="CDD" id="cd06089">
    <property type="entry name" value="KOW_RPL26"/>
    <property type="match status" value="1"/>
</dbReference>
<dbReference type="FunFam" id="2.30.30.30:FF:000004">
    <property type="entry name" value="50S ribosomal protein L24"/>
    <property type="match status" value="1"/>
</dbReference>
<dbReference type="Gene3D" id="2.30.30.30">
    <property type="match status" value="1"/>
</dbReference>
<dbReference type="HAMAP" id="MF_01326_B">
    <property type="entry name" value="Ribosomal_uL24_B"/>
    <property type="match status" value="1"/>
</dbReference>
<dbReference type="InterPro" id="IPR005824">
    <property type="entry name" value="KOW"/>
</dbReference>
<dbReference type="InterPro" id="IPR014722">
    <property type="entry name" value="Rib_uL2_dom2"/>
</dbReference>
<dbReference type="InterPro" id="IPR003256">
    <property type="entry name" value="Ribosomal_uL24"/>
</dbReference>
<dbReference type="InterPro" id="IPR005825">
    <property type="entry name" value="Ribosomal_uL24_CS"/>
</dbReference>
<dbReference type="InterPro" id="IPR041988">
    <property type="entry name" value="Ribosomal_uL24_KOW"/>
</dbReference>
<dbReference type="InterPro" id="IPR008991">
    <property type="entry name" value="Translation_prot_SH3-like_sf"/>
</dbReference>
<dbReference type="NCBIfam" id="TIGR01079">
    <property type="entry name" value="rplX_bact"/>
    <property type="match status" value="1"/>
</dbReference>
<dbReference type="PANTHER" id="PTHR12903">
    <property type="entry name" value="MITOCHONDRIAL RIBOSOMAL PROTEIN L24"/>
    <property type="match status" value="1"/>
</dbReference>
<dbReference type="Pfam" id="PF00467">
    <property type="entry name" value="KOW"/>
    <property type="match status" value="1"/>
</dbReference>
<dbReference type="Pfam" id="PF17136">
    <property type="entry name" value="ribosomal_L24"/>
    <property type="match status" value="1"/>
</dbReference>
<dbReference type="SMART" id="SM00739">
    <property type="entry name" value="KOW"/>
    <property type="match status" value="1"/>
</dbReference>
<dbReference type="SUPFAM" id="SSF50104">
    <property type="entry name" value="Translation proteins SH3-like domain"/>
    <property type="match status" value="1"/>
</dbReference>
<dbReference type="PROSITE" id="PS01108">
    <property type="entry name" value="RIBOSOMAL_L24"/>
    <property type="match status" value="1"/>
</dbReference>
<name>RL24_LACE2</name>
<protein>
    <recommendedName>
        <fullName evidence="1">Large ribosomal subunit protein uL24</fullName>
    </recommendedName>
    <alternativeName>
        <fullName evidence="2">50S ribosomal protein L24</fullName>
    </alternativeName>
</protein>
<reference key="1">
    <citation type="journal article" date="2009" name="Proc. Natl. Acad. Sci. U.S.A.">
        <title>Characterizing a model human gut microbiota composed of members of its two dominant bacterial phyla.</title>
        <authorList>
            <person name="Mahowald M.A."/>
            <person name="Rey F.E."/>
            <person name="Seedorf H."/>
            <person name="Turnbaugh P.J."/>
            <person name="Fulton R.S."/>
            <person name="Wollam A."/>
            <person name="Shah N."/>
            <person name="Wang C."/>
            <person name="Magrini V."/>
            <person name="Wilson R.K."/>
            <person name="Cantarel B.L."/>
            <person name="Coutinho P.M."/>
            <person name="Henrissat B."/>
            <person name="Crock L.W."/>
            <person name="Russell A."/>
            <person name="Verberkmoes N.C."/>
            <person name="Hettich R.L."/>
            <person name="Gordon J.I."/>
        </authorList>
    </citation>
    <scope>NUCLEOTIDE SEQUENCE [LARGE SCALE GENOMIC DNA]</scope>
    <source>
        <strain>ATCC 27750 / DSM 3376 / VPI C15-48 / C15-B4</strain>
    </source>
</reference>
<comment type="function">
    <text evidence="1">One of two assembly initiator proteins, it binds directly to the 5'-end of the 23S rRNA, where it nucleates assembly of the 50S subunit.</text>
</comment>
<comment type="function">
    <text evidence="1">One of the proteins that surrounds the polypeptide exit tunnel on the outside of the subunit.</text>
</comment>
<comment type="subunit">
    <text evidence="1">Part of the 50S ribosomal subunit.</text>
</comment>
<comment type="similarity">
    <text evidence="1">Belongs to the universal ribosomal protein uL24 family.</text>
</comment>
<proteinExistence type="inferred from homology"/>
<gene>
    <name evidence="1" type="primary">rplX</name>
    <name type="ordered locus">EUBELI_00310</name>
</gene>
<accession>C4Z2U1</accession>
<feature type="chain" id="PRO_1000214542" description="Large ribosomal subunit protein uL24">
    <location>
        <begin position="1"/>
        <end position="103"/>
    </location>
</feature>